<gene>
    <name evidence="13" type="primary">fut-1</name>
    <name evidence="9" type="synonym">CEFT-1</name>
    <name evidence="13" type="ORF">K08F8.3</name>
</gene>
<reference evidence="11" key="1">
    <citation type="journal article" date="2004" name="J. Biol. Chem.">
        <title>Molecular basis of anti-horseradish peroxidase staining in Caenorhabditis elegans.</title>
        <authorList>
            <person name="Paschinger K."/>
            <person name="Rendic D."/>
            <person name="Lochnit G."/>
            <person name="Jantsch V."/>
            <person name="Wilson I.B.H."/>
        </authorList>
    </citation>
    <scope>NUCLEOTIDE SEQUENCE [MRNA]</scope>
    <scope>FUNCTION</scope>
    <scope>CATALYTIC ACTIVITY</scope>
    <scope>PATHWAY</scope>
</reference>
<reference evidence="12" key="2">
    <citation type="journal article" date="1998" name="Science">
        <title>Genome sequence of the nematode C. elegans: a platform for investigating biology.</title>
        <authorList>
            <consortium name="The C. elegans sequencing consortium"/>
        </authorList>
    </citation>
    <scope>NUCLEOTIDE SEQUENCE [LARGE SCALE GENOMIC DNA]</scope>
    <source>
        <strain evidence="12">Bristol N2</strain>
    </source>
</reference>
<reference evidence="10" key="3">
    <citation type="journal article" date="1998" name="Glycobiology">
        <title>Molecular cloning and characterization of an alpha1,3 fucosyltransferase, CEFT-1, from Caenorhabditis elegans.</title>
        <authorList>
            <person name="DeBose-Boyd R.A."/>
            <person name="Nyame A.K."/>
            <person name="Cummings R.D."/>
        </authorList>
    </citation>
    <scope>FUNCTION</scope>
    <scope>CATALYTIC ACTIVITY</scope>
    <scope>PATHWAY</scope>
</reference>
<reference evidence="10" key="4">
    <citation type="journal article" date="2007" name="Glycobiology">
        <title>Molecular cloning and characterization of the Caenorhabditis elegans alpha1,3-fucosyltransferase family.</title>
        <authorList>
            <person name="Nguyen K."/>
            <person name="van Die I."/>
            <person name="Grundahl K.M."/>
            <person name="Kawar Z.S."/>
            <person name="Cummings R.D."/>
        </authorList>
    </citation>
    <scope>FUNCTION</scope>
    <scope>CATALYTIC ACTIVITY</scope>
    <scope>COFACTOR</scope>
    <scope>ACTIVITY REGULATION</scope>
    <scope>BIOPHYSICOCHEMICAL PROPERTIES</scope>
    <scope>PATHWAY</scope>
    <scope>TISSUE SPECIFICITY</scope>
    <scope>DEVELOPMENTAL STAGE</scope>
    <scope>GLYCOSYLATION</scope>
</reference>
<reference evidence="10" key="5">
    <citation type="journal article" date="2011" name="Glycobiology">
        <title>Distantly related plant and nematode core alpha1,3-fucosyltransferases display similar trends in structure-function relationships.</title>
        <authorList>
            <person name="Both P."/>
            <person name="Sobczak L."/>
            <person name="Breton C."/>
            <person name="Hann S."/>
            <person name="Noebauer K."/>
            <person name="Paschinger K."/>
            <person name="Kozmon S."/>
            <person name="Mucha J."/>
            <person name="Wilson I.B."/>
        </authorList>
    </citation>
    <scope>FUNCTION</scope>
    <scope>CATALYTIC ACTIVITY</scope>
    <scope>COFACTOR</scope>
    <scope>ACTIVITY REGULATION</scope>
    <scope>BIOPHYSICOCHEMICAL PROPERTIES</scope>
    <scope>DOMAIN</scope>
    <scope>GLYCOSYLATION</scope>
    <scope>MUTAGENESIS OF ASN-194; SER-243; ASP-303; THR-361 AND 424-GLY--ASP-433</scope>
</reference>
<organism evidence="12">
    <name type="scientific">Caenorhabditis elegans</name>
    <dbReference type="NCBI Taxonomy" id="6239"/>
    <lineage>
        <taxon>Eukaryota</taxon>
        <taxon>Metazoa</taxon>
        <taxon>Ecdysozoa</taxon>
        <taxon>Nematoda</taxon>
        <taxon>Chromadorea</taxon>
        <taxon>Rhabditida</taxon>
        <taxon>Rhabditina</taxon>
        <taxon>Rhabditomorpha</taxon>
        <taxon>Rhabditoidea</taxon>
        <taxon>Rhabditidae</taxon>
        <taxon>Peloderinae</taxon>
        <taxon>Caenorhabditis</taxon>
    </lineage>
</organism>
<proteinExistence type="evidence at protein level"/>
<protein>
    <recommendedName>
        <fullName evidence="9">Alpha-(1,3)-fucosyltransferase fut-1</fullName>
        <ecNumber evidence="5 6 7 8">2.4.1.214</ecNumber>
    </recommendedName>
    <alternativeName>
        <fullName evidence="10">Fucosyltransferase fut-1</fullName>
    </alternativeName>
</protein>
<sequence>MTARSIKLFFARWKYLMFACCITYLLVIYAPISKSEQKDWKEGEIELSNDHELDVPILQKEELKPQQRPSFEENVPKKKTFNFNPVGKEPFDVEEVLTSSDIKLEERMTATVIPGQKRLILSWNAGHSQDNLQGCPDWNCEFTQVRARAPDADAVLIAHMDNDFVPKPNQYVVYFSQESPANSGIQIPRPDYINMTLGFRHDTPAGSPYGYTVKLGAKSRKTGQVVDANLVNGKAKGAAWFVSHCQTNSKREDFVKKLQKHLQIDIYGGCGPMKCARGDSKCDTMLDTDYHFYVTFENSICEDYVTEKLWKSGYQNTIIPLVLKRKLVEPFVPPNSFIAIDDFKSVKEMGDYLNYLMNNKTAYMEYFEWRHDYKVVFLDGSHHDVLERPWGFCQVCRMAWTEPRQKVLIPNWDAYWRQTCEKDGTLVDSIPLD</sequence>
<dbReference type="EC" id="2.4.1.214" evidence="5 6 7 8"/>
<dbReference type="EMBL" id="AJ745071">
    <property type="protein sequence ID" value="CAG32977.1"/>
    <property type="molecule type" value="mRNA"/>
</dbReference>
<dbReference type="EMBL" id="BX284602">
    <property type="protein sequence ID" value="CAA91285.2"/>
    <property type="molecule type" value="Genomic_DNA"/>
</dbReference>
<dbReference type="PIR" id="T23491">
    <property type="entry name" value="T23491"/>
</dbReference>
<dbReference type="RefSeq" id="NP_001369885.1">
    <property type="nucleotide sequence ID" value="NM_001383908.2"/>
</dbReference>
<dbReference type="RefSeq" id="NP_495862.2">
    <property type="nucleotide sequence ID" value="NM_063461.5"/>
</dbReference>
<dbReference type="SMR" id="G5EDR5"/>
<dbReference type="FunCoup" id="G5EDR5">
    <property type="interactions" value="14"/>
</dbReference>
<dbReference type="STRING" id="6239.K08F8.3.2"/>
<dbReference type="CAZy" id="GT10">
    <property type="family name" value="Glycosyltransferase Family 10"/>
</dbReference>
<dbReference type="GlyCosmos" id="G5EDR5">
    <property type="glycosylation" value="2 sites, No reported glycans"/>
</dbReference>
<dbReference type="PaxDb" id="6239-K08F8.3.1"/>
<dbReference type="PeptideAtlas" id="G5EDR5"/>
<dbReference type="EnsemblMetazoa" id="K08F8.3.1">
    <property type="protein sequence ID" value="K08F8.3.1"/>
    <property type="gene ID" value="WBGene00001505"/>
</dbReference>
<dbReference type="EnsemblMetazoa" id="K08F8.3.2">
    <property type="protein sequence ID" value="K08F8.3.2"/>
    <property type="gene ID" value="WBGene00001505"/>
</dbReference>
<dbReference type="GeneID" id="174400"/>
<dbReference type="AGR" id="WB:WBGene00001505"/>
<dbReference type="WormBase" id="K08F8.3">
    <property type="protein sequence ID" value="CE32907"/>
    <property type="gene ID" value="WBGene00001505"/>
    <property type="gene designation" value="fut-1"/>
</dbReference>
<dbReference type="eggNOG" id="KOG2619">
    <property type="taxonomic scope" value="Eukaryota"/>
</dbReference>
<dbReference type="GeneTree" id="ENSGT00940000175840"/>
<dbReference type="HOGENOM" id="CLU_032075_8_0_1"/>
<dbReference type="InParanoid" id="G5EDR5"/>
<dbReference type="OMA" id="YLMFACC"/>
<dbReference type="OrthoDB" id="427096at2759"/>
<dbReference type="PhylomeDB" id="G5EDR5"/>
<dbReference type="BRENDA" id="2.4.1.214">
    <property type="organism ID" value="1045"/>
</dbReference>
<dbReference type="UniPathway" id="UPA00378"/>
<dbReference type="PRO" id="PR:G5EDR5"/>
<dbReference type="Proteomes" id="UP000001940">
    <property type="component" value="Chromosome II"/>
</dbReference>
<dbReference type="Bgee" id="WBGene00001505">
    <property type="expression patterns" value="Expressed in material anatomical entity and 4 other cell types or tissues"/>
</dbReference>
<dbReference type="GO" id="GO:0032580">
    <property type="term" value="C:Golgi cisterna membrane"/>
    <property type="evidence" value="ECO:0007669"/>
    <property type="project" value="UniProtKB-SubCell"/>
</dbReference>
<dbReference type="GO" id="GO:0000139">
    <property type="term" value="C:Golgi membrane"/>
    <property type="evidence" value="ECO:0000304"/>
    <property type="project" value="WormBase"/>
</dbReference>
<dbReference type="GO" id="GO:0017060">
    <property type="term" value="F:3-galactosyl-N-acetylglucosaminide 4-alpha-L-fucosyltransferase activity"/>
    <property type="evidence" value="ECO:0000315"/>
    <property type="project" value="UniProtKB"/>
</dbReference>
<dbReference type="GO" id="GO:0046920">
    <property type="term" value="F:alpha-(1-&gt;3)-fucosyltransferase activity"/>
    <property type="evidence" value="ECO:0000314"/>
    <property type="project" value="UniProtKB"/>
</dbReference>
<dbReference type="GO" id="GO:0008417">
    <property type="term" value="F:fucosyltransferase activity"/>
    <property type="evidence" value="ECO:0000316"/>
    <property type="project" value="UniProtKB"/>
</dbReference>
<dbReference type="GO" id="GO:0018392">
    <property type="term" value="F:glycoprotein 3-alpha-L-fucosyltransferase activity"/>
    <property type="evidence" value="ECO:0000315"/>
    <property type="project" value="UniProtKB"/>
</dbReference>
<dbReference type="GO" id="GO:0046872">
    <property type="term" value="F:metal ion binding"/>
    <property type="evidence" value="ECO:0007669"/>
    <property type="project" value="UniProtKB-KW"/>
</dbReference>
<dbReference type="GO" id="GO:0016051">
    <property type="term" value="P:carbohydrate biosynthetic process"/>
    <property type="evidence" value="ECO:0000314"/>
    <property type="project" value="WormBase"/>
</dbReference>
<dbReference type="GO" id="GO:0036065">
    <property type="term" value="P:fucosylation"/>
    <property type="evidence" value="ECO:0000314"/>
    <property type="project" value="UniProtKB"/>
</dbReference>
<dbReference type="GO" id="GO:0006486">
    <property type="term" value="P:protein glycosylation"/>
    <property type="evidence" value="ECO:0007669"/>
    <property type="project" value="UniProtKB-UniPathway"/>
</dbReference>
<dbReference type="FunFam" id="3.40.50.11660:FF:000015">
    <property type="entry name" value="Predicted protein"/>
    <property type="match status" value="1"/>
</dbReference>
<dbReference type="Gene3D" id="3.40.50.11660">
    <property type="entry name" value="Glycosyl transferase family 10, C-terminal domain"/>
    <property type="match status" value="1"/>
</dbReference>
<dbReference type="InterPro" id="IPR055270">
    <property type="entry name" value="Glyco_tran_10_C"/>
</dbReference>
<dbReference type="InterPro" id="IPR031481">
    <property type="entry name" value="Glyco_tran_10_N"/>
</dbReference>
<dbReference type="InterPro" id="IPR001503">
    <property type="entry name" value="Glyco_trans_10"/>
</dbReference>
<dbReference type="InterPro" id="IPR038577">
    <property type="entry name" value="GT10-like_C_sf"/>
</dbReference>
<dbReference type="PANTHER" id="PTHR48438">
    <property type="entry name" value="ALPHA-(1,3)-FUCOSYLTRANSFERASE C-RELATED"/>
    <property type="match status" value="1"/>
</dbReference>
<dbReference type="PANTHER" id="PTHR48438:SF1">
    <property type="entry name" value="ALPHA-(1,3)-FUCOSYLTRANSFERASE C-RELATED"/>
    <property type="match status" value="1"/>
</dbReference>
<dbReference type="Pfam" id="PF17039">
    <property type="entry name" value="Glyco_tran_10_N"/>
    <property type="match status" value="1"/>
</dbReference>
<dbReference type="Pfam" id="PF00852">
    <property type="entry name" value="Glyco_transf_10"/>
    <property type="match status" value="1"/>
</dbReference>
<dbReference type="SUPFAM" id="SSF53756">
    <property type="entry name" value="UDP-Glycosyltransferase/glycogen phosphorylase"/>
    <property type="match status" value="1"/>
</dbReference>
<name>FUTA_CAEEL</name>
<accession>G5EDR5</accession>
<feature type="chain" id="PRO_0000438178" description="Alpha-(1,3)-fucosyltransferase fut-1">
    <location>
        <begin position="1"/>
        <end position="433"/>
    </location>
</feature>
<feature type="topological domain" description="Cytoplasmic" evidence="10">
    <location>
        <begin position="1"/>
        <end position="12"/>
    </location>
</feature>
<feature type="transmembrane region" description="Helical; Signal-anchor for type II membrane protein" evidence="2">
    <location>
        <begin position="13"/>
        <end position="32"/>
    </location>
</feature>
<feature type="topological domain" description="Lumenal" evidence="10">
    <location>
        <begin position="33"/>
        <end position="433"/>
    </location>
</feature>
<feature type="site" description="May be important for donor substrate binding" evidence="7">
    <location>
        <position position="243"/>
    </location>
</feature>
<feature type="site" description="May be important for donor substrate binding" evidence="1">
    <location>
        <position position="267"/>
    </location>
</feature>
<feature type="glycosylation site" description="N-linked (GlcNAc...) asparagine" evidence="3">
    <location>
        <position position="194"/>
    </location>
</feature>
<feature type="glycosylation site" description="N-linked (GlcNAc...) asparagine" evidence="3">
    <location>
        <position position="359"/>
    </location>
</feature>
<feature type="mutagenesis site" description="Loss of catalytic activity." evidence="7">
    <original>N</original>
    <variation>Q</variation>
    <location>
        <position position="194"/>
    </location>
</feature>
<feature type="mutagenesis site" description="85 percent decrease in catalytic activity." evidence="7">
    <original>S</original>
    <variation>A</variation>
    <location>
        <position position="243"/>
    </location>
</feature>
<feature type="mutagenesis site" description="80 percent decrease in catalytic activity." evidence="7">
    <original>D</original>
    <variation>E</variation>
    <location>
        <position position="303"/>
    </location>
</feature>
<feature type="mutagenesis site" description="80 percent decrease in catalytic activity." evidence="7">
    <original>T</original>
    <variation>A</variation>
    <location>
        <position position="361"/>
    </location>
</feature>
<feature type="mutagenesis site" description="Loss of catalytic activity and reduced protein stability." evidence="7">
    <location>
        <begin position="424"/>
        <end position="433"/>
    </location>
</feature>
<comment type="function">
    <text evidence="5 6 7 8">Preferentially catalyzes the addition of fucose in alpha 1-3 linkage to the first GlcNAc residue (with or without alpha 1,6-linked fucose), next to the peptide chains in N-glycans (PubMed:15364955, PubMed:17369288, PubMed:21515584, PubMed:9675224). Unlike in mammals, does not require the prior action of N-acetylglucosaminyltransferase I to generate complex N-glycans (PubMed:15364955).</text>
</comment>
<comment type="catalytic activity">
    <reaction evidence="5 6 7 8">
        <text>N(4)-{beta-D-GlcNAc-(1-&gt;2)-alpha-D-Man-(1-&gt;3)-[beta-D-GlcNAc-(1-&gt;2)-alpha-D-Man-(1-&gt;6)]-beta-D-Man-(1-&gt;4)-beta-D-GlcNAc-(1-&gt;4)-beta-D-GlcNAc}-L-asparaginyl-[protein] + GDP-beta-L-fucose = N(4)-{beta-D-GlcNAc-(1-&gt;2)-alpha-D-Man-(1-&gt;3)-[beta-D-GlcNAc-(1-&gt;2)-alpha-D-Man-(1-&gt;6)]-beta-D-Man-(1-&gt;4)-beta-D-GlcNAc-(1-&gt;4)-[alpha-L-Fuc(1-&gt;3)]-beta-D-GlcNAc}-L-asparaginyl-[protein] + GDP + H(+)</text>
        <dbReference type="Rhea" id="RHEA:24444"/>
        <dbReference type="Rhea" id="RHEA-COMP:13526"/>
        <dbReference type="Rhea" id="RHEA-COMP:13529"/>
        <dbReference type="ChEBI" id="CHEBI:15378"/>
        <dbReference type="ChEBI" id="CHEBI:57273"/>
        <dbReference type="ChEBI" id="CHEBI:58189"/>
        <dbReference type="ChEBI" id="CHEBI:60651"/>
        <dbReference type="ChEBI" id="CHEBI:137182"/>
        <dbReference type="EC" id="2.4.1.214"/>
    </reaction>
</comment>
<comment type="cofactor">
    <cofactor evidence="6 7">
        <name>Mg(2+)</name>
        <dbReference type="ChEBI" id="CHEBI:18420"/>
    </cofactor>
    <cofactor evidence="6 7">
        <name>Mn(2+)</name>
        <dbReference type="ChEBI" id="CHEBI:29035"/>
    </cofactor>
    <text evidence="6 7">Can also use Co(2+) or Ca(2+) in vitro.</text>
</comment>
<comment type="activity regulation">
    <text evidence="6 7">Inhibited by Cu(2+) or Zn(2+) and to a lesser extent Ni(2+) ions.</text>
</comment>
<comment type="biophysicochemical properties">
    <kinetics>
        <KM evidence="7">0.1 mM for GDP-fucose (at pH 7.5 and 23 degrees Celsius)</KM>
        <KM evidence="7">400 uM for Man-alpha-1-6(Man-alpha-1-3)Man-alpha-1-6(Man-alpha-1-3)Man-beta-1-4GlcNAc-beta-1-4GlcNAc (at pH 7.5 and 23 degrees Celsius)</KM>
    </kinetics>
    <temperatureDependence>
        <text evidence="6">Optimum temperature is 23 degrees Celsius. No detectable activity at 37 degrees Celsius.</text>
    </temperatureDependence>
</comment>
<comment type="pathway">
    <text evidence="5 6 8">Protein modification; protein glycosylation.</text>
</comment>
<comment type="subcellular location">
    <subcellularLocation>
        <location evidence="4">Golgi apparatus</location>
        <location evidence="4">Golgi stack membrane</location>
        <topology evidence="4">Single-pass type II membrane protein</topology>
    </subcellularLocation>
</comment>
<comment type="tissue specificity">
    <text evidence="6">Expressed in the pharyngeal-intestinal (PI) and anal valves. Expressed in ASG neurons and in one or two neurons in the retrovesicular ganglion and two neurons posterior to the PI valve and PHA and PHB neurons in the tail.</text>
</comment>
<comment type="developmental stage">
    <text evidence="6">Expressed throughout development and in adult.</text>
</comment>
<comment type="domain">
    <text evidence="7">The C-terminus (424-433) is important for catalytic activity or for enzyme stability. The N-terminus (1-78) appears to be dispensable for enzymatic activity.</text>
</comment>
<comment type="PTM">
    <text evidence="6 7">N-glycosylated (PubMed:17369288, PubMed:21515584). Glycosylation is important for enzymatic activity (PubMed:21515584).</text>
</comment>
<comment type="similarity">
    <text evidence="4">Belongs to the glycosyltransferase 10 family.</text>
</comment>
<evidence type="ECO:0000250" key="1">
    <source>
        <dbReference type="UniProtKB" id="Q9LJK1"/>
    </source>
</evidence>
<evidence type="ECO:0000255" key="2"/>
<evidence type="ECO:0000255" key="3">
    <source>
        <dbReference type="PROSITE-ProRule" id="PRU00498"/>
    </source>
</evidence>
<evidence type="ECO:0000255" key="4">
    <source>
        <dbReference type="RuleBase" id="RU003832"/>
    </source>
</evidence>
<evidence type="ECO:0000269" key="5">
    <source>
    </source>
</evidence>
<evidence type="ECO:0000269" key="6">
    <source>
    </source>
</evidence>
<evidence type="ECO:0000269" key="7">
    <source>
    </source>
</evidence>
<evidence type="ECO:0000269" key="8">
    <source>
    </source>
</evidence>
<evidence type="ECO:0000303" key="9">
    <source>
    </source>
</evidence>
<evidence type="ECO:0000305" key="10"/>
<evidence type="ECO:0000312" key="11">
    <source>
        <dbReference type="EMBL" id="CAG32977.1"/>
    </source>
</evidence>
<evidence type="ECO:0000312" key="12">
    <source>
        <dbReference type="Proteomes" id="UP000001940"/>
    </source>
</evidence>
<evidence type="ECO:0000312" key="13">
    <source>
        <dbReference type="WormBase" id="K08F8.3"/>
    </source>
</evidence>
<keyword id="KW-0325">Glycoprotein</keyword>
<keyword id="KW-0328">Glycosyltransferase</keyword>
<keyword id="KW-0333">Golgi apparatus</keyword>
<keyword id="KW-0460">Magnesium</keyword>
<keyword id="KW-0464">Manganese</keyword>
<keyword id="KW-0472">Membrane</keyword>
<keyword id="KW-0479">Metal-binding</keyword>
<keyword id="KW-1185">Reference proteome</keyword>
<keyword id="KW-0735">Signal-anchor</keyword>
<keyword id="KW-0808">Transferase</keyword>
<keyword id="KW-0812">Transmembrane</keyword>
<keyword id="KW-1133">Transmembrane helix</keyword>